<dbReference type="EC" id="3.5.4.30" evidence="1"/>
<dbReference type="EMBL" id="CP000786">
    <property type="protein sequence ID" value="ABZ99311.1"/>
    <property type="molecule type" value="Genomic_DNA"/>
</dbReference>
<dbReference type="RefSeq" id="WP_012390167.1">
    <property type="nucleotide sequence ID" value="NC_010602.1"/>
</dbReference>
<dbReference type="SMR" id="B0SQR4"/>
<dbReference type="STRING" id="456481.LEPBI_I3246"/>
<dbReference type="KEGG" id="lbi:LEPBI_I3246"/>
<dbReference type="HOGENOM" id="CLU_087476_0_1_12"/>
<dbReference type="OrthoDB" id="9780202at2"/>
<dbReference type="BioCyc" id="LBIF456481:LEPBI_RS15900-MONOMER"/>
<dbReference type="UniPathway" id="UPA00610">
    <property type="reaction ID" value="UER00667"/>
</dbReference>
<dbReference type="Proteomes" id="UP000001847">
    <property type="component" value="Chromosome I"/>
</dbReference>
<dbReference type="GO" id="GO:0033973">
    <property type="term" value="F:dCTP deaminase (dUMP-forming) activity"/>
    <property type="evidence" value="ECO:0007669"/>
    <property type="project" value="UniProtKB-UniRule"/>
</dbReference>
<dbReference type="GO" id="GO:0008829">
    <property type="term" value="F:dCTP deaminase activity"/>
    <property type="evidence" value="ECO:0007669"/>
    <property type="project" value="InterPro"/>
</dbReference>
<dbReference type="GO" id="GO:0000166">
    <property type="term" value="F:nucleotide binding"/>
    <property type="evidence" value="ECO:0007669"/>
    <property type="project" value="UniProtKB-KW"/>
</dbReference>
<dbReference type="GO" id="GO:0006226">
    <property type="term" value="P:dUMP biosynthetic process"/>
    <property type="evidence" value="ECO:0007669"/>
    <property type="project" value="UniProtKB-UniRule"/>
</dbReference>
<dbReference type="GO" id="GO:0006229">
    <property type="term" value="P:dUTP biosynthetic process"/>
    <property type="evidence" value="ECO:0007669"/>
    <property type="project" value="InterPro"/>
</dbReference>
<dbReference type="GO" id="GO:0015949">
    <property type="term" value="P:nucleobase-containing small molecule interconversion"/>
    <property type="evidence" value="ECO:0007669"/>
    <property type="project" value="TreeGrafter"/>
</dbReference>
<dbReference type="CDD" id="cd07557">
    <property type="entry name" value="trimeric_dUTPase"/>
    <property type="match status" value="1"/>
</dbReference>
<dbReference type="FunFam" id="2.70.40.10:FF:000009">
    <property type="entry name" value="dCTP deaminase, dUMP-forming"/>
    <property type="match status" value="1"/>
</dbReference>
<dbReference type="Gene3D" id="2.70.40.10">
    <property type="match status" value="1"/>
</dbReference>
<dbReference type="HAMAP" id="MF_00146">
    <property type="entry name" value="dCTP_deaminase"/>
    <property type="match status" value="1"/>
</dbReference>
<dbReference type="InterPro" id="IPR011962">
    <property type="entry name" value="dCTP_deaminase"/>
</dbReference>
<dbReference type="InterPro" id="IPR036157">
    <property type="entry name" value="dUTPase-like_sf"/>
</dbReference>
<dbReference type="InterPro" id="IPR033704">
    <property type="entry name" value="dUTPase_trimeric"/>
</dbReference>
<dbReference type="NCBIfam" id="TIGR02274">
    <property type="entry name" value="dCTP_deam"/>
    <property type="match status" value="1"/>
</dbReference>
<dbReference type="PANTHER" id="PTHR42680">
    <property type="entry name" value="DCTP DEAMINASE"/>
    <property type="match status" value="1"/>
</dbReference>
<dbReference type="PANTHER" id="PTHR42680:SF3">
    <property type="entry name" value="DCTP DEAMINASE"/>
    <property type="match status" value="1"/>
</dbReference>
<dbReference type="Pfam" id="PF22769">
    <property type="entry name" value="DCD"/>
    <property type="match status" value="1"/>
</dbReference>
<dbReference type="SUPFAM" id="SSF51283">
    <property type="entry name" value="dUTPase-like"/>
    <property type="match status" value="1"/>
</dbReference>
<feature type="chain" id="PRO_1000117979" description="dCTP deaminase, dUMP-forming">
    <location>
        <begin position="1"/>
        <end position="174"/>
    </location>
</feature>
<feature type="active site" description="Proton donor/acceptor" evidence="1">
    <location>
        <position position="121"/>
    </location>
</feature>
<feature type="binding site" evidence="1">
    <location>
        <begin position="93"/>
        <end position="98"/>
    </location>
    <ligand>
        <name>dCTP</name>
        <dbReference type="ChEBI" id="CHEBI:61481"/>
    </ligand>
</feature>
<feature type="binding site" evidence="1">
    <location>
        <position position="111"/>
    </location>
    <ligand>
        <name>dCTP</name>
        <dbReference type="ChEBI" id="CHEBI:61481"/>
    </ligand>
</feature>
<feature type="binding site" evidence="1">
    <location>
        <begin position="119"/>
        <end position="121"/>
    </location>
    <ligand>
        <name>dCTP</name>
        <dbReference type="ChEBI" id="CHEBI:61481"/>
    </ligand>
</feature>
<feature type="binding site" evidence="1">
    <location>
        <position position="138"/>
    </location>
    <ligand>
        <name>dCTP</name>
        <dbReference type="ChEBI" id="CHEBI:61481"/>
    </ligand>
</feature>
<feature type="binding site" evidence="1">
    <location>
        <position position="151"/>
    </location>
    <ligand>
        <name>dCTP</name>
        <dbReference type="ChEBI" id="CHEBI:61481"/>
    </ligand>
</feature>
<feature type="site" description="Important for bifunctional activity" evidence="1">
    <location>
        <begin position="108"/>
        <end position="109"/>
    </location>
</feature>
<name>DCDB_LEPBP</name>
<keyword id="KW-0378">Hydrolase</keyword>
<keyword id="KW-0546">Nucleotide metabolism</keyword>
<keyword id="KW-0547">Nucleotide-binding</keyword>
<keyword id="KW-1185">Reference proteome</keyword>
<evidence type="ECO:0000255" key="1">
    <source>
        <dbReference type="HAMAP-Rule" id="MF_00146"/>
    </source>
</evidence>
<organism>
    <name type="scientific">Leptospira biflexa serovar Patoc (strain Patoc 1 / ATCC 23582 / Paris)</name>
    <dbReference type="NCBI Taxonomy" id="456481"/>
    <lineage>
        <taxon>Bacteria</taxon>
        <taxon>Pseudomonadati</taxon>
        <taxon>Spirochaetota</taxon>
        <taxon>Spirochaetia</taxon>
        <taxon>Leptospirales</taxon>
        <taxon>Leptospiraceae</taxon>
        <taxon>Leptospira</taxon>
    </lineage>
</organism>
<gene>
    <name evidence="1" type="primary">dcd</name>
    <name type="ordered locus">LEPBI_I3246</name>
</gene>
<proteinExistence type="inferred from homology"/>
<comment type="function">
    <text evidence="1">Bifunctional enzyme that catalyzes both the deamination of dCTP to dUTP and the hydrolysis of dUTP to dUMP without releasing the toxic dUTP intermediate.</text>
</comment>
<comment type="catalytic activity">
    <reaction evidence="1">
        <text>dCTP + 2 H2O = dUMP + NH4(+) + diphosphate</text>
        <dbReference type="Rhea" id="RHEA:19205"/>
        <dbReference type="ChEBI" id="CHEBI:15377"/>
        <dbReference type="ChEBI" id="CHEBI:28938"/>
        <dbReference type="ChEBI" id="CHEBI:33019"/>
        <dbReference type="ChEBI" id="CHEBI:61481"/>
        <dbReference type="ChEBI" id="CHEBI:246422"/>
        <dbReference type="EC" id="3.5.4.30"/>
    </reaction>
</comment>
<comment type="pathway">
    <text evidence="1">Pyrimidine metabolism; dUMP biosynthesis; dUMP from dCTP: step 1/1.</text>
</comment>
<comment type="subunit">
    <text evidence="1">Homotrimer.</text>
</comment>
<comment type="similarity">
    <text evidence="1">Belongs to the dCTP deaminase family.</text>
</comment>
<reference key="1">
    <citation type="journal article" date="2008" name="PLoS ONE">
        <title>Genome sequence of the saprophyte Leptospira biflexa provides insights into the evolution of Leptospira and the pathogenesis of leptospirosis.</title>
        <authorList>
            <person name="Picardeau M."/>
            <person name="Bulach D.M."/>
            <person name="Bouchier C."/>
            <person name="Zuerner R.L."/>
            <person name="Zidane N."/>
            <person name="Wilson P.J."/>
            <person name="Creno S."/>
            <person name="Kuczek E.S."/>
            <person name="Bommezzadri S."/>
            <person name="Davis J.C."/>
            <person name="McGrath A."/>
            <person name="Johnson M.J."/>
            <person name="Boursaux-Eude C."/>
            <person name="Seemann T."/>
            <person name="Rouy Z."/>
            <person name="Coppel R.L."/>
            <person name="Rood J.I."/>
            <person name="Lajus A."/>
            <person name="Davies J.K."/>
            <person name="Medigue C."/>
            <person name="Adler B."/>
        </authorList>
    </citation>
    <scope>NUCLEOTIDE SEQUENCE [LARGE SCALE GENOMIC DNA]</scope>
    <source>
        <strain>Patoc 1 / ATCC 23582 / Paris</strain>
    </source>
</reference>
<sequence length="174" mass="19933">MILTGKEILKRLGSDIKIEPYDEKLLNPNSYNLRLHEDLLVYSEFPLDMKKPNPVRTLKIPEEGLLLEPGNLYLGRTIEFTETHNLVPMLEGRSSIGRLGMFVHITAGFGDVGFKGFWTLEIQVTHPLRVYSGVQICQIFYHTVEGEISEYKSGKYQANQGIQPSLLYKDFEKK</sequence>
<accession>B0SQR4</accession>
<protein>
    <recommendedName>
        <fullName evidence="1">dCTP deaminase, dUMP-forming</fullName>
        <ecNumber evidence="1">3.5.4.30</ecNumber>
    </recommendedName>
    <alternativeName>
        <fullName evidence="1">Bifunctional dCTP deaminase:dUTPase</fullName>
    </alternativeName>
    <alternativeName>
        <fullName evidence="1">DCD-DUT</fullName>
    </alternativeName>
</protein>